<protein>
    <recommendedName>
        <fullName>Uncharacterized protein sll0103</fullName>
    </recommendedName>
</protein>
<name>Y103_SYNY3</name>
<feature type="chain" id="PRO_0000157860" description="Uncharacterized protein sll0103">
    <location>
        <begin position="1"/>
        <end position="420"/>
    </location>
</feature>
<feature type="domain" description="VWFA" evidence="1">
    <location>
        <begin position="43"/>
        <end position="215"/>
    </location>
</feature>
<feature type="region of interest" description="Disordered" evidence="2">
    <location>
        <begin position="389"/>
        <end position="420"/>
    </location>
</feature>
<dbReference type="EMBL" id="BA000022">
    <property type="protein sequence ID" value="BAA10635.1"/>
    <property type="molecule type" value="Genomic_DNA"/>
</dbReference>
<dbReference type="PIR" id="S76691">
    <property type="entry name" value="S76691"/>
</dbReference>
<dbReference type="SMR" id="Q55874"/>
<dbReference type="IntAct" id="Q55874">
    <property type="interactions" value="6"/>
</dbReference>
<dbReference type="STRING" id="1148.gene:10500139"/>
<dbReference type="TCDB" id="1.A.13.2.2">
    <property type="family name" value="the epithelial chloride channel (e-clc) family"/>
</dbReference>
<dbReference type="PaxDb" id="1148-1208467"/>
<dbReference type="EnsemblBacteria" id="BAA10635">
    <property type="protein sequence ID" value="BAA10635"/>
    <property type="gene ID" value="BAA10635"/>
</dbReference>
<dbReference type="KEGG" id="syn:sll0103"/>
<dbReference type="eggNOG" id="COG2304">
    <property type="taxonomic scope" value="Bacteria"/>
</dbReference>
<dbReference type="InParanoid" id="Q55874"/>
<dbReference type="PhylomeDB" id="Q55874"/>
<dbReference type="Proteomes" id="UP000001425">
    <property type="component" value="Chromosome"/>
</dbReference>
<dbReference type="CDD" id="cd01465">
    <property type="entry name" value="vWA_subgroup"/>
    <property type="match status" value="1"/>
</dbReference>
<dbReference type="Gene3D" id="3.40.50.410">
    <property type="entry name" value="von Willebrand factor, type A domain"/>
    <property type="match status" value="1"/>
</dbReference>
<dbReference type="InterPro" id="IPR051266">
    <property type="entry name" value="CLCR"/>
</dbReference>
<dbReference type="InterPro" id="IPR002035">
    <property type="entry name" value="VWF_A"/>
</dbReference>
<dbReference type="InterPro" id="IPR036465">
    <property type="entry name" value="vWFA_dom_sf"/>
</dbReference>
<dbReference type="PANTHER" id="PTHR10579">
    <property type="entry name" value="CALCIUM-ACTIVATED CHLORIDE CHANNEL REGULATOR"/>
    <property type="match status" value="1"/>
</dbReference>
<dbReference type="PANTHER" id="PTHR10579:SF43">
    <property type="entry name" value="ZINC FINGER (C3HC4-TYPE RING FINGER) FAMILY PROTEIN"/>
    <property type="match status" value="1"/>
</dbReference>
<dbReference type="Pfam" id="PF00092">
    <property type="entry name" value="VWA"/>
    <property type="match status" value="1"/>
</dbReference>
<dbReference type="SMART" id="SM00327">
    <property type="entry name" value="VWA"/>
    <property type="match status" value="1"/>
</dbReference>
<dbReference type="SUPFAM" id="SSF53300">
    <property type="entry name" value="vWA-like"/>
    <property type="match status" value="1"/>
</dbReference>
<dbReference type="PROSITE" id="PS50234">
    <property type="entry name" value="VWFA"/>
    <property type="match status" value="1"/>
</dbReference>
<keyword id="KW-1185">Reference proteome</keyword>
<proteinExistence type="predicted"/>
<sequence length="420" mass="45850">MRIDLSLLLSDQNLDAGAPTSQRQLRIAVAAKADDHDRRLPLNLCLVLDHSGSMDGQPLETVKSAALGLIDRLEEDDRLSVIAFDHRAKIVIENQQVRNGAAIAKAIERLKAEGGTAIDEGLKLGIQEAAKGKEDRVSHIFLLTDGENEHGDNDRCLKLGTVASDYKLTVHTLGFGDHWNQDVLEAIAASAQGSLSYIENPSEALHTFRQLFQRMSNVGLTNAHLLLELAPQAHLAIVKPVAQVSPETMDLTVQNQGAIEEVRLGDLMTDQERVLLLNLYLDQLLPGQHVIGQVQIRYDDPASGQTNLLSDPLPLTIQVQTQYQPSTDVQVQESILTLAKYRQTQIAETKLKAGDRQGAATMLQTAAKTALQMGDKNGATILQTNATRLQSGEDLSEGDRKKTRMVSKTTLQPPSAPSEH</sequence>
<organism>
    <name type="scientific">Synechocystis sp. (strain ATCC 27184 / PCC 6803 / Kazusa)</name>
    <dbReference type="NCBI Taxonomy" id="1111708"/>
    <lineage>
        <taxon>Bacteria</taxon>
        <taxon>Bacillati</taxon>
        <taxon>Cyanobacteriota</taxon>
        <taxon>Cyanophyceae</taxon>
        <taxon>Synechococcales</taxon>
        <taxon>Merismopediaceae</taxon>
        <taxon>Synechocystis</taxon>
    </lineage>
</organism>
<accession>Q55874</accession>
<evidence type="ECO:0000255" key="1">
    <source>
        <dbReference type="PROSITE-ProRule" id="PRU00219"/>
    </source>
</evidence>
<evidence type="ECO:0000256" key="2">
    <source>
        <dbReference type="SAM" id="MobiDB-lite"/>
    </source>
</evidence>
<gene>
    <name type="ordered locus">sll0103</name>
</gene>
<reference key="1">
    <citation type="journal article" date="1995" name="DNA Res.">
        <title>Sequence analysis of the genome of the unicellular cyanobacterium Synechocystis sp. strain PCC6803. I. Sequence features in the 1 Mb region from map positions 64% to 92% of the genome.</title>
        <authorList>
            <person name="Kaneko T."/>
            <person name="Tanaka A."/>
            <person name="Sato S."/>
            <person name="Kotani H."/>
            <person name="Sazuka T."/>
            <person name="Miyajima N."/>
            <person name="Sugiura M."/>
            <person name="Tabata S."/>
        </authorList>
    </citation>
    <scope>NUCLEOTIDE SEQUENCE [LARGE SCALE GENOMIC DNA]</scope>
    <source>
        <strain>ATCC 27184 / PCC 6803 / N-1</strain>
    </source>
</reference>
<reference key="2">
    <citation type="journal article" date="1996" name="DNA Res.">
        <title>Sequence analysis of the genome of the unicellular cyanobacterium Synechocystis sp. strain PCC6803. II. Sequence determination of the entire genome and assignment of potential protein-coding regions.</title>
        <authorList>
            <person name="Kaneko T."/>
            <person name="Sato S."/>
            <person name="Kotani H."/>
            <person name="Tanaka A."/>
            <person name="Asamizu E."/>
            <person name="Nakamura Y."/>
            <person name="Miyajima N."/>
            <person name="Hirosawa M."/>
            <person name="Sugiura M."/>
            <person name="Sasamoto S."/>
            <person name="Kimura T."/>
            <person name="Hosouchi T."/>
            <person name="Matsuno A."/>
            <person name="Muraki A."/>
            <person name="Nakazaki N."/>
            <person name="Naruo K."/>
            <person name="Okumura S."/>
            <person name="Shimpo S."/>
            <person name="Takeuchi C."/>
            <person name="Wada T."/>
            <person name="Watanabe A."/>
            <person name="Yamada M."/>
            <person name="Yasuda M."/>
            <person name="Tabata S."/>
        </authorList>
    </citation>
    <scope>NUCLEOTIDE SEQUENCE [LARGE SCALE GENOMIC DNA]</scope>
    <source>
        <strain>ATCC 27184 / PCC 6803 / Kazusa</strain>
    </source>
</reference>